<dbReference type="EC" id="2.7.6.3" evidence="1"/>
<dbReference type="EMBL" id="CP000003">
    <property type="protein sequence ID" value="AAT86957.1"/>
    <property type="molecule type" value="Genomic_DNA"/>
</dbReference>
<dbReference type="RefSeq" id="WP_009880425.1">
    <property type="nucleotide sequence ID" value="NC_006086.1"/>
</dbReference>
<dbReference type="SMR" id="Q5XCA6"/>
<dbReference type="KEGG" id="spa:M6_Spy0822"/>
<dbReference type="HOGENOM" id="CLU_097916_1_2_9"/>
<dbReference type="UniPathway" id="UPA00077">
    <property type="reaction ID" value="UER00155"/>
</dbReference>
<dbReference type="Proteomes" id="UP000001167">
    <property type="component" value="Chromosome"/>
</dbReference>
<dbReference type="GO" id="GO:0003848">
    <property type="term" value="F:2-amino-4-hydroxy-6-hydroxymethyldihydropteridine diphosphokinase activity"/>
    <property type="evidence" value="ECO:0007669"/>
    <property type="project" value="UniProtKB-EC"/>
</dbReference>
<dbReference type="GO" id="GO:0005524">
    <property type="term" value="F:ATP binding"/>
    <property type="evidence" value="ECO:0007669"/>
    <property type="project" value="UniProtKB-KW"/>
</dbReference>
<dbReference type="GO" id="GO:0016301">
    <property type="term" value="F:kinase activity"/>
    <property type="evidence" value="ECO:0007669"/>
    <property type="project" value="UniProtKB-KW"/>
</dbReference>
<dbReference type="GO" id="GO:0046656">
    <property type="term" value="P:folic acid biosynthetic process"/>
    <property type="evidence" value="ECO:0007669"/>
    <property type="project" value="UniProtKB-KW"/>
</dbReference>
<dbReference type="GO" id="GO:0046654">
    <property type="term" value="P:tetrahydrofolate biosynthetic process"/>
    <property type="evidence" value="ECO:0007669"/>
    <property type="project" value="UniProtKB-UniPathway"/>
</dbReference>
<dbReference type="CDD" id="cd00483">
    <property type="entry name" value="HPPK"/>
    <property type="match status" value="1"/>
</dbReference>
<dbReference type="Gene3D" id="3.30.70.560">
    <property type="entry name" value="7,8-Dihydro-6-hydroxymethylpterin-pyrophosphokinase HPPK"/>
    <property type="match status" value="1"/>
</dbReference>
<dbReference type="InterPro" id="IPR000550">
    <property type="entry name" value="Hppk"/>
</dbReference>
<dbReference type="InterPro" id="IPR035907">
    <property type="entry name" value="Hppk_sf"/>
</dbReference>
<dbReference type="NCBIfam" id="TIGR01498">
    <property type="entry name" value="folK"/>
    <property type="match status" value="1"/>
</dbReference>
<dbReference type="PANTHER" id="PTHR43071">
    <property type="entry name" value="2-AMINO-4-HYDROXY-6-HYDROXYMETHYLDIHYDROPTERIDINE PYROPHOSPHOKINASE"/>
    <property type="match status" value="1"/>
</dbReference>
<dbReference type="PANTHER" id="PTHR43071:SF1">
    <property type="entry name" value="2-AMINO-4-HYDROXY-6-HYDROXYMETHYLDIHYDROPTERIDINE PYROPHOSPHOKINASE"/>
    <property type="match status" value="1"/>
</dbReference>
<dbReference type="Pfam" id="PF01288">
    <property type="entry name" value="HPPK"/>
    <property type="match status" value="1"/>
</dbReference>
<dbReference type="SUPFAM" id="SSF55083">
    <property type="entry name" value="6-hydroxymethyl-7,8-dihydropterin pyrophosphokinase, HPPK"/>
    <property type="match status" value="1"/>
</dbReference>
<dbReference type="PROSITE" id="PS00794">
    <property type="entry name" value="HPPK"/>
    <property type="match status" value="1"/>
</dbReference>
<gene>
    <name type="primary">folK</name>
    <name type="ordered locus">M6_Spy0822</name>
</gene>
<protein>
    <recommendedName>
        <fullName evidence="1">2-amino-4-hydroxy-6-hydroxymethyldihydropteridine pyrophosphokinase</fullName>
        <ecNumber evidence="1">2.7.6.3</ecNumber>
    </recommendedName>
    <alternativeName>
        <fullName evidence="1">6-hydroxymethyl-7,8-dihydropterin pyrophosphokinase</fullName>
        <shortName evidence="1">PPPK</shortName>
    </alternativeName>
    <alternativeName>
        <fullName evidence="1">7,8-dihydro-6-hydroxymethylpterin-pyrophosphokinase</fullName>
        <shortName evidence="1">HPPK</shortName>
    </alternativeName>
</protein>
<comment type="function">
    <text evidence="1">Catalyzes the transfer of pyrophosphate from adenosine triphosphate (ATP) to 6-hydroxymethyl-7,8-dihydropterin, an enzymatic step in folate biosynthesis pathway.</text>
</comment>
<comment type="catalytic activity">
    <reaction evidence="1">
        <text>6-hydroxymethyl-7,8-dihydropterin + ATP = (7,8-dihydropterin-6-yl)methyl diphosphate + AMP + H(+)</text>
        <dbReference type="Rhea" id="RHEA:11412"/>
        <dbReference type="ChEBI" id="CHEBI:15378"/>
        <dbReference type="ChEBI" id="CHEBI:30616"/>
        <dbReference type="ChEBI" id="CHEBI:44841"/>
        <dbReference type="ChEBI" id="CHEBI:72950"/>
        <dbReference type="ChEBI" id="CHEBI:456215"/>
        <dbReference type="EC" id="2.7.6.3"/>
    </reaction>
</comment>
<comment type="pathway">
    <text evidence="1">Cofactor biosynthesis; tetrahydrofolate biosynthesis; 2-amino-4-hydroxy-6-hydroxymethyl-7,8-dihydropteridine diphosphate from 7,8-dihydroneopterin triphosphate: step 4/4.</text>
</comment>
<comment type="similarity">
    <text evidence="2">Belongs to the HPPK family.</text>
</comment>
<sequence length="166" mass="18813">MTIVYLSLGTNMGDRAAYLQKALEALADLPQTRLLAQSSIYETTAWGKTGQADFLNMACQLDTQLTAADFLKETQAIEQSLGRVRHEKWGSRTIDIDILLFGEEVYDTKELKVPHPYMTERAFVLIPLLELQSDLKLPPNHKFLRDYLAALDQSDITLFSAQQTEF</sequence>
<feature type="chain" id="PRO_0000168262" description="2-amino-4-hydroxy-6-hydroxymethyldihydropteridine pyrophosphokinase">
    <location>
        <begin position="1"/>
        <end position="166"/>
    </location>
</feature>
<name>HPPK_STRP6</name>
<organism>
    <name type="scientific">Streptococcus pyogenes serotype M6 (strain ATCC BAA-946 / MGAS10394)</name>
    <dbReference type="NCBI Taxonomy" id="286636"/>
    <lineage>
        <taxon>Bacteria</taxon>
        <taxon>Bacillati</taxon>
        <taxon>Bacillota</taxon>
        <taxon>Bacilli</taxon>
        <taxon>Lactobacillales</taxon>
        <taxon>Streptococcaceae</taxon>
        <taxon>Streptococcus</taxon>
    </lineage>
</organism>
<evidence type="ECO:0000250" key="1">
    <source>
        <dbReference type="UniProtKB" id="P26281"/>
    </source>
</evidence>
<evidence type="ECO:0000305" key="2"/>
<proteinExistence type="inferred from homology"/>
<reference key="1">
    <citation type="journal article" date="2004" name="J. Infect. Dis.">
        <title>Progress toward characterization of the group A Streptococcus metagenome: complete genome sequence of a macrolide-resistant serotype M6 strain.</title>
        <authorList>
            <person name="Banks D.J."/>
            <person name="Porcella S.F."/>
            <person name="Barbian K.D."/>
            <person name="Beres S.B."/>
            <person name="Philips L.E."/>
            <person name="Voyich J.M."/>
            <person name="DeLeo F.R."/>
            <person name="Martin J.M."/>
            <person name="Somerville G.A."/>
            <person name="Musser J.M."/>
        </authorList>
    </citation>
    <scope>NUCLEOTIDE SEQUENCE [LARGE SCALE GENOMIC DNA]</scope>
    <source>
        <strain>ATCC BAA-946 / MGAS10394</strain>
    </source>
</reference>
<accession>Q5XCA6</accession>
<keyword id="KW-0067">ATP-binding</keyword>
<keyword id="KW-0289">Folate biosynthesis</keyword>
<keyword id="KW-0418">Kinase</keyword>
<keyword id="KW-0547">Nucleotide-binding</keyword>
<keyword id="KW-0808">Transferase</keyword>